<name>DLTA_STRA5</name>
<gene>
    <name evidence="1" type="primary">dltA</name>
    <name type="ordered locus">SAG1790</name>
</gene>
<accession>P59591</accession>
<comment type="function">
    <text evidence="1">Catalyzes the first step in the D-alanylation of lipoteichoic acid (LTA), the activation of D-alanine and its transfer onto the D-alanyl carrier protein (Dcp) DltC. In an ATP-dependent two-step reaction, forms a high energy D-alanyl-AMP intermediate, followed by transfer of the D-alanyl residue as a thiol ester to the phosphopantheinyl prosthetic group of the Dcp. D-alanylation of LTA plays an important role in modulating the properties of the cell wall in Gram-positive bacteria, influencing the net charge of the cell wall.</text>
</comment>
<comment type="catalytic activity">
    <reaction evidence="1">
        <text>holo-[D-alanyl-carrier protein] + D-alanine + ATP = D-alanyl-[D-alanyl-carrier protein] + AMP + diphosphate</text>
        <dbReference type="Rhea" id="RHEA:55132"/>
        <dbReference type="Rhea" id="RHEA-COMP:14102"/>
        <dbReference type="Rhea" id="RHEA-COMP:14103"/>
        <dbReference type="ChEBI" id="CHEBI:30616"/>
        <dbReference type="ChEBI" id="CHEBI:33019"/>
        <dbReference type="ChEBI" id="CHEBI:57416"/>
        <dbReference type="ChEBI" id="CHEBI:64479"/>
        <dbReference type="ChEBI" id="CHEBI:138620"/>
        <dbReference type="ChEBI" id="CHEBI:456215"/>
        <dbReference type="EC" id="6.2.1.54"/>
    </reaction>
</comment>
<comment type="pathway">
    <text evidence="1">Cell wall biogenesis; lipoteichoic acid biosynthesis.</text>
</comment>
<comment type="subcellular location">
    <subcellularLocation>
        <location evidence="1">Cytoplasm</location>
    </subcellularLocation>
</comment>
<comment type="similarity">
    <text evidence="1 2">Belongs to the ATP-dependent AMP-binding enzyme family. DltA subfamily.</text>
</comment>
<sequence length="511" mass="57195">MIHDMIKTIEHFAETQADFPVYDILGEVHTYGQLKVDSDSLAAHIDSLGLVEKSPVLVFGGQEYEMLATFVALTKSGHAYIPVDQHSALDRIQAIMTVAQPSLIISIGEFPLEVDNVPILDVSQVSAIFEEKTPYEVTHSVKGDDNYYIIFTSGTTGLPKGVQISHDNLLSFTNWMISDDEFSVPERPQMLAQPPYSFDLSVMYWAPTLAMGGTLFALPKTVVNDFKKLFATINELPIQVWTSTPSFADMALLSNDFNSETLPQLTHFYFDGEELTVKTAQKLRQRFPKARIVNAYGPTEATVALSAVAITDEMLETCKRLPIGYTKDDSPTYVIDEEGHKLPNGEQGEIIIAGPAVSKGYLNNPEKTAEAFFQFEGLPAYHTGDLGSMTDEGLLLYGGRMDFQIKFNGYRIELEDVSQNLNKSQYVKSAVAVPRYNKDHKVQNLLAYIVLKEGVRDDFERDLDLTKAIKEDLKDIMMDYMMPSKFIYREDLPLTPNGKIDIKGLMSEVNK</sequence>
<keyword id="KW-0067">ATP-binding</keyword>
<keyword id="KW-0963">Cytoplasm</keyword>
<keyword id="KW-0436">Ligase</keyword>
<keyword id="KW-0547">Nucleotide-binding</keyword>
<keyword id="KW-1185">Reference proteome</keyword>
<protein>
    <recommendedName>
        <fullName evidence="1">D-alanine--D-alanyl carrier protein ligase</fullName>
        <shortName evidence="1">DCL</shortName>
        <ecNumber evidence="1">6.2.1.54</ecNumber>
    </recommendedName>
    <alternativeName>
        <fullName evidence="1">D-alanine--poly(phosphoribitol) ligase subunit 1</fullName>
    </alternativeName>
    <alternativeName>
        <fullName evidence="1">D-alanine-activating enzyme</fullName>
        <shortName evidence="1">DAE</shortName>
    </alternativeName>
</protein>
<dbReference type="EC" id="6.2.1.54" evidence="1"/>
<dbReference type="EMBL" id="AE009948">
    <property type="protein sequence ID" value="AAN00653.1"/>
    <property type="molecule type" value="Genomic_DNA"/>
</dbReference>
<dbReference type="RefSeq" id="NP_688780.1">
    <property type="nucleotide sequence ID" value="NC_004116.1"/>
</dbReference>
<dbReference type="RefSeq" id="WP_000581010.1">
    <property type="nucleotide sequence ID" value="NC_004116.1"/>
</dbReference>
<dbReference type="SMR" id="P59591"/>
<dbReference type="STRING" id="208435.SAG1790"/>
<dbReference type="BindingDB" id="P59591"/>
<dbReference type="GeneID" id="66886628"/>
<dbReference type="KEGG" id="sag:SAG1790"/>
<dbReference type="PATRIC" id="fig|208435.3.peg.1797"/>
<dbReference type="HOGENOM" id="CLU_000022_2_12_9"/>
<dbReference type="OrthoDB" id="9765680at2"/>
<dbReference type="UniPathway" id="UPA00556"/>
<dbReference type="Proteomes" id="UP000000821">
    <property type="component" value="Chromosome"/>
</dbReference>
<dbReference type="GO" id="GO:0005737">
    <property type="term" value="C:cytoplasm"/>
    <property type="evidence" value="ECO:0007669"/>
    <property type="project" value="UniProtKB-SubCell"/>
</dbReference>
<dbReference type="GO" id="GO:0005524">
    <property type="term" value="F:ATP binding"/>
    <property type="evidence" value="ECO:0007669"/>
    <property type="project" value="UniProtKB-KW"/>
</dbReference>
<dbReference type="GO" id="GO:0047473">
    <property type="term" value="F:D-alanine [D-alanyl carrier protein] ligase activity"/>
    <property type="evidence" value="ECO:0007669"/>
    <property type="project" value="UniProtKB-UniRule"/>
</dbReference>
<dbReference type="GO" id="GO:0070395">
    <property type="term" value="P:lipoteichoic acid biosynthetic process"/>
    <property type="evidence" value="ECO:0007669"/>
    <property type="project" value="UniProtKB-UniRule"/>
</dbReference>
<dbReference type="CDD" id="cd05945">
    <property type="entry name" value="DltA"/>
    <property type="match status" value="1"/>
</dbReference>
<dbReference type="FunFam" id="3.30.300.30:FF:000012">
    <property type="entry name" value="D-alanine--D-alanyl carrier protein ligase"/>
    <property type="match status" value="1"/>
</dbReference>
<dbReference type="Gene3D" id="3.30.300.30">
    <property type="match status" value="1"/>
</dbReference>
<dbReference type="Gene3D" id="3.40.50.12780">
    <property type="entry name" value="N-terminal domain of ligase-like"/>
    <property type="match status" value="1"/>
</dbReference>
<dbReference type="HAMAP" id="MF_00593">
    <property type="entry name" value="DltA"/>
    <property type="match status" value="1"/>
</dbReference>
<dbReference type="InterPro" id="IPR010071">
    <property type="entry name" value="AA_adenyl_dom"/>
</dbReference>
<dbReference type="InterPro" id="IPR025110">
    <property type="entry name" value="AMP-bd_C"/>
</dbReference>
<dbReference type="InterPro" id="IPR045851">
    <property type="entry name" value="AMP-bd_C_sf"/>
</dbReference>
<dbReference type="InterPro" id="IPR020845">
    <property type="entry name" value="AMP-binding_CS"/>
</dbReference>
<dbReference type="InterPro" id="IPR000873">
    <property type="entry name" value="AMP-dep_synth/lig_dom"/>
</dbReference>
<dbReference type="InterPro" id="IPR042099">
    <property type="entry name" value="ANL_N_sf"/>
</dbReference>
<dbReference type="InterPro" id="IPR010072">
    <property type="entry name" value="DltA"/>
</dbReference>
<dbReference type="InterPro" id="IPR044507">
    <property type="entry name" value="DltA-like"/>
</dbReference>
<dbReference type="NCBIfam" id="TIGR01733">
    <property type="entry name" value="AA-adenyl-dom"/>
    <property type="match status" value="1"/>
</dbReference>
<dbReference type="NCBIfam" id="TIGR01734">
    <property type="entry name" value="D-ala-DACP-lig"/>
    <property type="match status" value="1"/>
</dbReference>
<dbReference type="NCBIfam" id="NF003417">
    <property type="entry name" value="PRK04813.1"/>
    <property type="match status" value="1"/>
</dbReference>
<dbReference type="PANTHER" id="PTHR45398">
    <property type="match status" value="1"/>
</dbReference>
<dbReference type="PANTHER" id="PTHR45398:SF1">
    <property type="entry name" value="ENZYME, PUTATIVE (JCVI)-RELATED"/>
    <property type="match status" value="1"/>
</dbReference>
<dbReference type="Pfam" id="PF00501">
    <property type="entry name" value="AMP-binding"/>
    <property type="match status" value="1"/>
</dbReference>
<dbReference type="Pfam" id="PF13193">
    <property type="entry name" value="AMP-binding_C"/>
    <property type="match status" value="1"/>
</dbReference>
<dbReference type="SUPFAM" id="SSF56801">
    <property type="entry name" value="Acetyl-CoA synthetase-like"/>
    <property type="match status" value="1"/>
</dbReference>
<dbReference type="PROSITE" id="PS00455">
    <property type="entry name" value="AMP_BINDING"/>
    <property type="match status" value="1"/>
</dbReference>
<feature type="chain" id="PRO_0000213161" description="D-alanine--D-alanyl carrier protein ligase">
    <location>
        <begin position="1"/>
        <end position="511"/>
    </location>
</feature>
<feature type="binding site" evidence="1">
    <location>
        <begin position="152"/>
        <end position="153"/>
    </location>
    <ligand>
        <name>ATP</name>
        <dbReference type="ChEBI" id="CHEBI:30616"/>
    </ligand>
</feature>
<feature type="binding site" evidence="1">
    <location>
        <position position="199"/>
    </location>
    <ligand>
        <name>D-alanine</name>
        <dbReference type="ChEBI" id="CHEBI:57416"/>
    </ligand>
</feature>
<feature type="binding site" evidence="1">
    <location>
        <begin position="294"/>
        <end position="299"/>
    </location>
    <ligand>
        <name>ATP</name>
        <dbReference type="ChEBI" id="CHEBI:30616"/>
    </ligand>
</feature>
<feature type="binding site" evidence="1">
    <location>
        <position position="303"/>
    </location>
    <ligand>
        <name>D-alanine</name>
        <dbReference type="ChEBI" id="CHEBI:57416"/>
    </ligand>
</feature>
<feature type="binding site" evidence="1">
    <location>
        <position position="385"/>
    </location>
    <ligand>
        <name>ATP</name>
        <dbReference type="ChEBI" id="CHEBI:30616"/>
    </ligand>
</feature>
<feature type="binding site" evidence="1">
    <location>
        <begin position="397"/>
        <end position="400"/>
    </location>
    <ligand>
        <name>ATP</name>
        <dbReference type="ChEBI" id="CHEBI:30616"/>
    </ligand>
</feature>
<feature type="binding site" evidence="1">
    <location>
        <position position="499"/>
    </location>
    <ligand>
        <name>ATP</name>
        <dbReference type="ChEBI" id="CHEBI:30616"/>
    </ligand>
</feature>
<feature type="binding site" evidence="1">
    <location>
        <position position="499"/>
    </location>
    <ligand>
        <name>D-alanine</name>
        <dbReference type="ChEBI" id="CHEBI:57416"/>
    </ligand>
</feature>
<reference key="1">
    <citation type="journal article" date="2002" name="Proc. Natl. Acad. Sci. U.S.A.">
        <title>Complete genome sequence and comparative genomic analysis of an emerging human pathogen, serotype V Streptococcus agalactiae.</title>
        <authorList>
            <person name="Tettelin H."/>
            <person name="Masignani V."/>
            <person name="Cieslewicz M.J."/>
            <person name="Eisen J.A."/>
            <person name="Peterson S.N."/>
            <person name="Wessels M.R."/>
            <person name="Paulsen I.T."/>
            <person name="Nelson K.E."/>
            <person name="Margarit I."/>
            <person name="Read T.D."/>
            <person name="Madoff L.C."/>
            <person name="Wolf A.M."/>
            <person name="Beanan M.J."/>
            <person name="Brinkac L.M."/>
            <person name="Daugherty S.C."/>
            <person name="DeBoy R.T."/>
            <person name="Durkin A.S."/>
            <person name="Kolonay J.F."/>
            <person name="Madupu R."/>
            <person name="Lewis M.R."/>
            <person name="Radune D."/>
            <person name="Fedorova N.B."/>
            <person name="Scanlan D."/>
            <person name="Khouri H.M."/>
            <person name="Mulligan S."/>
            <person name="Carty H.A."/>
            <person name="Cline R.T."/>
            <person name="Van Aken S.E."/>
            <person name="Gill J."/>
            <person name="Scarselli M."/>
            <person name="Mora M."/>
            <person name="Iacobini E.T."/>
            <person name="Brettoni C."/>
            <person name="Galli G."/>
            <person name="Mariani M."/>
            <person name="Vegni F."/>
            <person name="Maione D."/>
            <person name="Rinaudo D."/>
            <person name="Rappuoli R."/>
            <person name="Telford J.L."/>
            <person name="Kasper D.L."/>
            <person name="Grandi G."/>
            <person name="Fraser C.M."/>
        </authorList>
    </citation>
    <scope>NUCLEOTIDE SEQUENCE [LARGE SCALE GENOMIC DNA]</scope>
    <source>
        <strain>ATCC BAA-611 / 2603 V/R</strain>
    </source>
</reference>
<evidence type="ECO:0000255" key="1">
    <source>
        <dbReference type="HAMAP-Rule" id="MF_00593"/>
    </source>
</evidence>
<evidence type="ECO:0000305" key="2"/>
<organism>
    <name type="scientific">Streptococcus agalactiae serotype V (strain ATCC BAA-611 / 2603 V/R)</name>
    <dbReference type="NCBI Taxonomy" id="208435"/>
    <lineage>
        <taxon>Bacteria</taxon>
        <taxon>Bacillati</taxon>
        <taxon>Bacillota</taxon>
        <taxon>Bacilli</taxon>
        <taxon>Lactobacillales</taxon>
        <taxon>Streptococcaceae</taxon>
        <taxon>Streptococcus</taxon>
    </lineage>
</organism>
<proteinExistence type="inferred from homology"/>